<accession>P85644</accession>
<comment type="function">
    <text evidence="4">Mediates visceral muscle contractile activity (myotropic activity).</text>
</comment>
<comment type="subcellular location">
    <subcellularLocation>
        <location evidence="4">Secreted</location>
    </subcellularLocation>
</comment>
<comment type="similarity">
    <text evidence="1">Belongs to the periviscerokinin family.</text>
</comment>
<reference evidence="4" key="1">
    <citation type="journal article" date="2009" name="BMC Evol. Biol.">
        <title>A proteomic approach for studying insect phylogeny: CAPA peptides of ancient insect taxa (Dictyoptera, Blattoptera) as a test case.</title>
        <authorList>
            <person name="Roth S."/>
            <person name="Fromm B."/>
            <person name="Gaede G."/>
            <person name="Predel R."/>
        </authorList>
    </citation>
    <scope>PROTEIN SEQUENCE</scope>
    <scope>AMIDATION AT VAL-11</scope>
    <source>
        <tissue evidence="2">Abdominal perisympathetic organs</tissue>
    </source>
</reference>
<organism>
    <name type="scientific">Gyna cf. cafforum (strain SR-2005)</name>
    <name type="common">Cockroach</name>
    <dbReference type="NCBI Taxonomy" id="348763"/>
    <lineage>
        <taxon>Eukaryota</taxon>
        <taxon>Metazoa</taxon>
        <taxon>Ecdysozoa</taxon>
        <taxon>Arthropoda</taxon>
        <taxon>Hexapoda</taxon>
        <taxon>Insecta</taxon>
        <taxon>Pterygota</taxon>
        <taxon>Neoptera</taxon>
        <taxon>Polyneoptera</taxon>
        <taxon>Dictyoptera</taxon>
        <taxon>Blattodea</taxon>
        <taxon>Blaberoidea</taxon>
        <taxon>Blaberidae</taxon>
        <taxon>Gyninae</taxon>
        <taxon>Gyna</taxon>
    </lineage>
</organism>
<evidence type="ECO:0000255" key="1"/>
<evidence type="ECO:0000269" key="2">
    <source>
    </source>
</evidence>
<evidence type="ECO:0000303" key="3">
    <source>
    </source>
</evidence>
<evidence type="ECO:0000305" key="4"/>
<sequence>GSSGLISMPRV</sequence>
<feature type="peptide" id="PRO_0000378791" description="Periviscerokinin-2" evidence="2">
    <location>
        <begin position="1"/>
        <end position="11"/>
    </location>
</feature>
<feature type="modified residue" description="Valine amide" evidence="2">
    <location>
        <position position="11"/>
    </location>
</feature>
<dbReference type="GO" id="GO:0005576">
    <property type="term" value="C:extracellular region"/>
    <property type="evidence" value="ECO:0007669"/>
    <property type="project" value="UniProtKB-SubCell"/>
</dbReference>
<dbReference type="GO" id="GO:0007218">
    <property type="term" value="P:neuropeptide signaling pathway"/>
    <property type="evidence" value="ECO:0007669"/>
    <property type="project" value="UniProtKB-KW"/>
</dbReference>
<dbReference type="InterPro" id="IPR013231">
    <property type="entry name" value="Periviscerokinin"/>
</dbReference>
<dbReference type="Pfam" id="PF08259">
    <property type="entry name" value="Periviscerokin"/>
    <property type="match status" value="1"/>
</dbReference>
<proteinExistence type="evidence at protein level"/>
<keyword id="KW-0027">Amidation</keyword>
<keyword id="KW-0903">Direct protein sequencing</keyword>
<keyword id="KW-0527">Neuropeptide</keyword>
<keyword id="KW-0964">Secreted</keyword>
<protein>
    <recommendedName>
        <fullName evidence="3">Periviscerokinin-2</fullName>
        <shortName evidence="3">GynCa-PVK-2</shortName>
    </recommendedName>
</protein>
<name>PVK2_GYNCS</name>